<sequence length="830" mass="92137">MASLPFNTIPNKVPFSVSSKPSSKHHDEQAHSPSSTSYFHRVSSLCKNGEIKEALSLVTEMDFRNLRIGPEIYGEILQGCVYERDLSTGKQIHARILKNGDFYARNEYIETKLVIFYAKCDALEIAEVLFSKLRVRNVFSWAAIIGVKCRIGLCEGALMGFVEMLENEIFPDNFVVPNVCKACGALKWSRFGRGVHGYVVKSGLEDCVFVASSLADMYGKCGVLDDASKVFDEIPDRNAVAWNALMVGYVQNGKNEEAIRLFSDMRKQGVEPTRVTVSTCLSASANMGGVEEGKQSHAIAIVNGMELDNILGTSLLNFYCKVGLIEYAEMVFDRMFEKDVVTWNLIISGYVQQGLVEDAIYMCQLMRLEKLKYDCVTLATLMSAAARTENLKLGKEVQCYCIRHSFESDIVLASTVMDMYAKCGSIVDAKKVFDSTVEKDLILWNTLLAAYAESGLSGEALRLFYGMQLEGVPPNVITWNLIILSLLRNGQVDEAKDMFLQMQSSGIIPNLISWTTMMNGMVQNGCSEEAILFLRKMQESGLRPNAFSITVALSACAHLASLHIGRTIHGYIIRNLQHSSLVSIETSLVDMYAKCGDINKAEKVFGSKLYSELPLSNAMISAYALYGNLKEAIALYRSLEGVGLKPDNITITNVLSACNHAGDINQAIEIFTDIVSKRSMKPCLEHYGLMVDLLASAGETEKALRLIEEMPFKPDARMIQSLVASCNKQRKTELVDYLSRKLLESEPENSGNYVTISNAYAVEGSWDEVVKMREMMKAKGLKKKPGCSWIQITGEEGVHVFVANDKTHTRINEIQMMLALLLYDMGTGSK</sequence>
<keyword id="KW-0150">Chloroplast</keyword>
<keyword id="KW-0934">Plastid</keyword>
<keyword id="KW-1185">Reference proteome</keyword>
<keyword id="KW-0677">Repeat</keyword>
<keyword id="KW-0809">Transit peptide</keyword>
<proteinExistence type="evidence at transcript level"/>
<reference key="1">
    <citation type="journal article" date="1998" name="DNA Res.">
        <title>Structural analysis of Arabidopsis thaliana chromosome 5. IV. Sequence features of the regions of 1,456,315 bp covered by nineteen physically assigned P1 and TAC clones.</title>
        <authorList>
            <person name="Sato S."/>
            <person name="Kaneko T."/>
            <person name="Kotani H."/>
            <person name="Nakamura Y."/>
            <person name="Asamizu E."/>
            <person name="Miyajima N."/>
            <person name="Tabata S."/>
        </authorList>
    </citation>
    <scope>NUCLEOTIDE SEQUENCE [LARGE SCALE GENOMIC DNA]</scope>
    <source>
        <strain>cv. Columbia</strain>
    </source>
</reference>
<reference key="2">
    <citation type="journal article" date="2017" name="Plant J.">
        <title>Araport11: a complete reannotation of the Arabidopsis thaliana reference genome.</title>
        <authorList>
            <person name="Cheng C.Y."/>
            <person name="Krishnakumar V."/>
            <person name="Chan A.P."/>
            <person name="Thibaud-Nissen F."/>
            <person name="Schobel S."/>
            <person name="Town C.D."/>
        </authorList>
    </citation>
    <scope>GENOME REANNOTATION</scope>
    <source>
        <strain>cv. Columbia</strain>
    </source>
</reference>
<reference key="3">
    <citation type="journal article" date="2000" name="Plant Mol. Biol.">
        <title>In Arabidopsis thaliana, 1% of the genome codes for a novel protein family unique to plants.</title>
        <authorList>
            <person name="Aubourg S."/>
            <person name="Boudet N."/>
            <person name="Kreis M."/>
            <person name="Lecharny A."/>
        </authorList>
    </citation>
    <scope>GENE FAMILY</scope>
</reference>
<reference key="4">
    <citation type="journal article" date="2004" name="Plant Cell">
        <title>Genome-wide analysis of Arabidopsis pentatricopeptide repeat proteins reveals their essential role in organelle biogenesis.</title>
        <authorList>
            <person name="Lurin C."/>
            <person name="Andres C."/>
            <person name="Aubourg S."/>
            <person name="Bellaoui M."/>
            <person name="Bitton F."/>
            <person name="Bruyere C."/>
            <person name="Caboche M."/>
            <person name="Debast C."/>
            <person name="Gualberto J."/>
            <person name="Hoffmann B."/>
            <person name="Lecharny A."/>
            <person name="Le Ret M."/>
            <person name="Martin-Magniette M.-L."/>
            <person name="Mireau H."/>
            <person name="Peeters N."/>
            <person name="Renou J.-P."/>
            <person name="Szurek B."/>
            <person name="Taconnat L."/>
            <person name="Small I."/>
        </authorList>
    </citation>
    <scope>GENE FAMILY</scope>
</reference>
<reference key="5">
    <citation type="journal article" date="2007" name="Proc. Natl. Acad. Sci. U.S.A.">
        <title>Conserved domain structure of pentatricopeptide repeat proteins involved in chloroplast RNA editing.</title>
        <authorList>
            <person name="Okuda K."/>
            <person name="Myouga F."/>
            <person name="Motohashi R."/>
            <person name="Shinozaki K."/>
            <person name="Shikanai T."/>
        </authorList>
    </citation>
    <scope>FUNCTION</scope>
</reference>
<dbReference type="EMBL" id="AB009050">
    <property type="protein sequence ID" value="BAB09241.1"/>
    <property type="molecule type" value="Genomic_DNA"/>
</dbReference>
<dbReference type="EMBL" id="CP002688">
    <property type="protein sequence ID" value="AED96675.1"/>
    <property type="molecule type" value="Genomic_DNA"/>
</dbReference>
<dbReference type="RefSeq" id="NP_200385.1">
    <property type="nucleotide sequence ID" value="NM_124956.2"/>
</dbReference>
<dbReference type="SMR" id="Q9FM64"/>
<dbReference type="FunCoup" id="Q9FM64">
    <property type="interactions" value="1494"/>
</dbReference>
<dbReference type="STRING" id="3702.Q9FM64"/>
<dbReference type="iPTMnet" id="Q9FM64"/>
<dbReference type="PaxDb" id="3702-AT5G55740.1"/>
<dbReference type="ProteomicsDB" id="249312"/>
<dbReference type="EnsemblPlants" id="AT5G55740.1">
    <property type="protein sequence ID" value="AT5G55740.1"/>
    <property type="gene ID" value="AT5G55740"/>
</dbReference>
<dbReference type="GeneID" id="835668"/>
<dbReference type="Gramene" id="AT5G55740.1">
    <property type="protein sequence ID" value="AT5G55740.1"/>
    <property type="gene ID" value="AT5G55740"/>
</dbReference>
<dbReference type="KEGG" id="ath:AT5G55740"/>
<dbReference type="Araport" id="AT5G55740"/>
<dbReference type="TAIR" id="AT5G55740">
    <property type="gene designation" value="CRR21"/>
</dbReference>
<dbReference type="eggNOG" id="KOG4197">
    <property type="taxonomic scope" value="Eukaryota"/>
</dbReference>
<dbReference type="HOGENOM" id="CLU_002706_15_1_1"/>
<dbReference type="InParanoid" id="Q9FM64"/>
<dbReference type="OMA" id="VMPERTV"/>
<dbReference type="PhylomeDB" id="Q9FM64"/>
<dbReference type="PRO" id="PR:Q9FM64"/>
<dbReference type="Proteomes" id="UP000006548">
    <property type="component" value="Chromosome 5"/>
</dbReference>
<dbReference type="ExpressionAtlas" id="Q9FM64">
    <property type="expression patterns" value="baseline and differential"/>
</dbReference>
<dbReference type="GO" id="GO:0009507">
    <property type="term" value="C:chloroplast"/>
    <property type="evidence" value="ECO:0007669"/>
    <property type="project" value="UniProtKB-SubCell"/>
</dbReference>
<dbReference type="GO" id="GO:0003729">
    <property type="term" value="F:mRNA binding"/>
    <property type="evidence" value="ECO:0000314"/>
    <property type="project" value="TAIR"/>
</dbReference>
<dbReference type="GO" id="GO:0016556">
    <property type="term" value="P:mRNA modification"/>
    <property type="evidence" value="ECO:0000315"/>
    <property type="project" value="TAIR"/>
</dbReference>
<dbReference type="FunFam" id="1.25.40.10:FF:000073">
    <property type="entry name" value="Pentatricopeptide repeat-containing protein chloroplastic"/>
    <property type="match status" value="1"/>
</dbReference>
<dbReference type="FunFam" id="1.25.40.10:FF:000090">
    <property type="entry name" value="Pentatricopeptide repeat-containing protein, chloroplastic"/>
    <property type="match status" value="1"/>
</dbReference>
<dbReference type="FunFam" id="1.25.40.10:FF:000380">
    <property type="entry name" value="Pentatricopeptide repeat-containing protein, chloroplastic"/>
    <property type="match status" value="1"/>
</dbReference>
<dbReference type="FunFam" id="1.25.40.10:FF:000646">
    <property type="entry name" value="Pentatricopeptide repeat-containing protein, chloroplastic"/>
    <property type="match status" value="1"/>
</dbReference>
<dbReference type="Gene3D" id="1.25.40.10">
    <property type="entry name" value="Tetratricopeptide repeat domain"/>
    <property type="match status" value="5"/>
</dbReference>
<dbReference type="InterPro" id="IPR046848">
    <property type="entry name" value="E_motif"/>
</dbReference>
<dbReference type="InterPro" id="IPR002885">
    <property type="entry name" value="Pentatricopeptide_rpt"/>
</dbReference>
<dbReference type="InterPro" id="IPR046960">
    <property type="entry name" value="PPR_At4g14850-like_plant"/>
</dbReference>
<dbReference type="InterPro" id="IPR011990">
    <property type="entry name" value="TPR-like_helical_dom_sf"/>
</dbReference>
<dbReference type="NCBIfam" id="TIGR00756">
    <property type="entry name" value="PPR"/>
    <property type="match status" value="7"/>
</dbReference>
<dbReference type="PANTHER" id="PTHR47926">
    <property type="entry name" value="PENTATRICOPEPTIDE REPEAT-CONTAINING PROTEIN"/>
    <property type="match status" value="1"/>
</dbReference>
<dbReference type="PANTHER" id="PTHR47926:SF347">
    <property type="entry name" value="PENTATRICOPEPTIDE REPEAT-CONTAINING PROTEIN"/>
    <property type="match status" value="1"/>
</dbReference>
<dbReference type="Pfam" id="PF20431">
    <property type="entry name" value="E_motif"/>
    <property type="match status" value="1"/>
</dbReference>
<dbReference type="Pfam" id="PF01535">
    <property type="entry name" value="PPR"/>
    <property type="match status" value="7"/>
</dbReference>
<dbReference type="Pfam" id="PF13041">
    <property type="entry name" value="PPR_2"/>
    <property type="match status" value="3"/>
</dbReference>
<dbReference type="SUPFAM" id="SSF48452">
    <property type="entry name" value="TPR-like"/>
    <property type="match status" value="2"/>
</dbReference>
<dbReference type="PROSITE" id="PS51375">
    <property type="entry name" value="PPR"/>
    <property type="match status" value="17"/>
</dbReference>
<gene>
    <name type="primary">CRR21</name>
    <name type="synonym">PCMP-E18</name>
    <name type="ordered locus">At5g55740</name>
    <name type="ORF">MDF20.18</name>
</gene>
<feature type="transit peptide" description="Chloroplast" evidence="1">
    <location>
        <begin position="1"/>
        <end position="59"/>
    </location>
</feature>
<feature type="chain" id="PRO_0000363568" description="Pentatricopeptide repeat-containing protein At5g55740, chloroplastic">
    <location>
        <begin position="60"/>
        <end position="830"/>
    </location>
</feature>
<feature type="repeat" description="PPR 1">
    <location>
        <begin position="69"/>
        <end position="103"/>
    </location>
</feature>
<feature type="repeat" description="PPR 2">
    <location>
        <begin position="106"/>
        <end position="136"/>
    </location>
</feature>
<feature type="repeat" description="PPR 3">
    <location>
        <begin position="137"/>
        <end position="171"/>
    </location>
</feature>
<feature type="repeat" description="PPR 4">
    <location>
        <begin position="172"/>
        <end position="206"/>
    </location>
</feature>
<feature type="repeat" description="PPR 5">
    <location>
        <begin position="207"/>
        <end position="237"/>
    </location>
</feature>
<feature type="repeat" description="PPR 6">
    <location>
        <begin position="238"/>
        <end position="272"/>
    </location>
</feature>
<feature type="repeat" description="PPR 7">
    <location>
        <begin position="273"/>
        <end position="307"/>
    </location>
</feature>
<feature type="repeat" description="PPR 8">
    <location>
        <begin position="308"/>
        <end position="338"/>
    </location>
</feature>
<feature type="repeat" description="PPR 9">
    <location>
        <begin position="339"/>
        <end position="373"/>
    </location>
</feature>
<feature type="repeat" description="PPR 10">
    <location>
        <begin position="374"/>
        <end position="408"/>
    </location>
</feature>
<feature type="repeat" description="PPR 11">
    <location>
        <begin position="409"/>
        <end position="439"/>
    </location>
</feature>
<feature type="repeat" description="PPR 12">
    <location>
        <begin position="440"/>
        <end position="474"/>
    </location>
</feature>
<feature type="repeat" description="PPR 13">
    <location>
        <begin position="475"/>
        <end position="509"/>
    </location>
</feature>
<feature type="repeat" description="PPR 14">
    <location>
        <begin position="510"/>
        <end position="544"/>
    </location>
</feature>
<feature type="repeat" description="PPR 15">
    <location>
        <begin position="545"/>
        <end position="575"/>
    </location>
</feature>
<feature type="repeat" description="PPR 16">
    <location>
        <begin position="581"/>
        <end position="611"/>
    </location>
</feature>
<feature type="repeat" description="PPR 17">
    <location>
        <begin position="612"/>
        <end position="646"/>
    </location>
</feature>
<feature type="repeat" description="PPR 18">
    <location>
        <begin position="647"/>
        <end position="682"/>
    </location>
</feature>
<feature type="repeat" description="PPR 19">
    <location>
        <begin position="683"/>
        <end position="713"/>
    </location>
</feature>
<feature type="region of interest" description="Disordered" evidence="2">
    <location>
        <begin position="15"/>
        <end position="36"/>
    </location>
</feature>
<feature type="region of interest" description="Type E motif">
    <location>
        <begin position="718"/>
        <end position="793"/>
    </location>
</feature>
<feature type="region of interest" description="Type E(+) motif">
    <location>
        <begin position="796"/>
        <end position="826"/>
    </location>
</feature>
<evidence type="ECO:0000255" key="1"/>
<evidence type="ECO:0000256" key="2">
    <source>
        <dbReference type="SAM" id="MobiDB-lite"/>
    </source>
</evidence>
<evidence type="ECO:0000269" key="3">
    <source>
    </source>
</evidence>
<evidence type="ECO:0000305" key="4"/>
<comment type="function">
    <text evidence="3">Plays a major role in chloroplast RNA editing. Acts as a site-recognition transacting factor involved in the edition of the site 2 of ndhD (ndhD-2), which encodes a subunit of the NDH complex.</text>
</comment>
<comment type="subcellular location">
    <subcellularLocation>
        <location evidence="4">Plastid</location>
        <location evidence="4">Chloroplast</location>
    </subcellularLocation>
</comment>
<comment type="similarity">
    <text evidence="4">Belongs to the PPR family. PCMP-E subfamily.</text>
</comment>
<comment type="online information" name="Pentatricopeptide repeat proteins">
    <link uri="https://ppr.plantenergy.uwa.edu.au"/>
</comment>
<organism>
    <name type="scientific">Arabidopsis thaliana</name>
    <name type="common">Mouse-ear cress</name>
    <dbReference type="NCBI Taxonomy" id="3702"/>
    <lineage>
        <taxon>Eukaryota</taxon>
        <taxon>Viridiplantae</taxon>
        <taxon>Streptophyta</taxon>
        <taxon>Embryophyta</taxon>
        <taxon>Tracheophyta</taxon>
        <taxon>Spermatophyta</taxon>
        <taxon>Magnoliopsida</taxon>
        <taxon>eudicotyledons</taxon>
        <taxon>Gunneridae</taxon>
        <taxon>Pentapetalae</taxon>
        <taxon>rosids</taxon>
        <taxon>malvids</taxon>
        <taxon>Brassicales</taxon>
        <taxon>Brassicaceae</taxon>
        <taxon>Camelineae</taxon>
        <taxon>Arabidopsis</taxon>
    </lineage>
</organism>
<name>PP431_ARATH</name>
<accession>Q9FM64</accession>
<protein>
    <recommendedName>
        <fullName>Pentatricopeptide repeat-containing protein At5g55740, chloroplastic</fullName>
    </recommendedName>
    <alternativeName>
        <fullName>Protein CHLORORESPIRATORY REDUCTION 21</fullName>
    </alternativeName>
</protein>